<comment type="function">
    <text evidence="1 2 6 9">Nuclear receptor for calcitriol, the active form of vitamin D3 which mediates the action of this vitamin on cells (By similarity). Enters the nucleus upon vitamin D3 binding where it forms heterodimers with the retinoid X receptor/RXR (By similarity). The VDR-RXR heterodimers bind to specific response elements on DNA and activate the transcription of vitamin D3-responsive target genes (By similarity). Plays a central role in calcium homeostasis (PubMed:32354638). Also functions as a receptor for the secondary bile acid lithocholic acid (LCA) and its metabolites (PubMed:12016314, PubMed:32354638).</text>
</comment>
<comment type="subunit">
    <text evidence="1 8">Homodimer in the absence of bound vitamin D3. Heterodimer with RXRA after vitamin D3 binding. Interacts with MED1, NCOA1, NCOA2, NCOA3 and NCOA6 coactivators, leading to a strong increase of transcription of target genes. Interacts with the corepressor NCOR1. Interacts with SNW1. Interacts with IRX4, the interaction does not affect its transactivation activity (By similarity). Interacts with CRY1 (PubMed:28751364). Interacts with CRY2 in a ligand-dependent manner (PubMed:28751364).</text>
</comment>
<comment type="interaction">
    <interactant intactId="EBI-346797">
        <id>P48281</id>
    </interactant>
    <interactant intactId="EBI-537752">
        <id>Q925T6</id>
        <label>Grip1</label>
    </interactant>
    <organismsDiffer>false</organismsDiffer>
    <experiments>2</experiments>
</comment>
<comment type="interaction">
    <interactant intactId="EBI-346797">
        <id>P48281</id>
    </interactant>
    <interactant intactId="EBI-645025">
        <id>Q64337</id>
        <label>Sqstm1</label>
    </interactant>
    <organismsDiffer>false</organismsDiffer>
    <experiments>3</experiments>
</comment>
<comment type="interaction">
    <interactant intactId="EBI-346797">
        <id>P48281</id>
    </interactant>
    <interactant intactId="EBI-389564">
        <id>Q00403</id>
        <label>GTF2B</label>
    </interactant>
    <organismsDiffer>true</organismsDiffer>
    <experiments>2</experiments>
</comment>
<comment type="interaction">
    <interactant intactId="EBI-346797">
        <id>P48281</id>
    </interactant>
    <interactant intactId="EBI-81196">
        <id>Q9Y6Q9</id>
        <label>NCOA3</label>
    </interactant>
    <organismsDiffer>true</organismsDiffer>
    <experiments>2</experiments>
</comment>
<comment type="interaction">
    <interactant intactId="EBI-346797">
        <id>P48281</id>
    </interactant>
    <interactant intactId="EBI-632715">
        <id>Q13573</id>
        <label>SNW1</label>
    </interactant>
    <organismsDiffer>true</organismsDiffer>
    <experiments>2</experiments>
</comment>
<comment type="subcellular location">
    <subcellularLocation>
        <location evidence="1 3">Nucleus</location>
    </subcellularLocation>
    <subcellularLocation>
        <location evidence="1">Cytoplasm</location>
    </subcellularLocation>
    <text evidence="1">Localizes mainly to the nucleus. Translocated into the nucleus via both ligand-dependent and ligand-independent pathways; ligand-independent nuclear translocation is mediated by IPO4.</text>
</comment>
<comment type="induction">
    <text evidence="7">By 1,25-dihydroxyvitamin D(3) in kidney.</text>
</comment>
<comment type="domain">
    <text evidence="1">Composed of three domains: a modulating N-terminal domain, a DNA-binding domain and a C-terminal ligand-binding domain.</text>
</comment>
<comment type="domain">
    <text evidence="1">The 9aaTAD motif is a transactivation domain present in a large number of yeast and animal transcription factors.</text>
</comment>
<comment type="PTM">
    <text evidence="1">Ubiquitinated by UBR5, leading to its degradation: UBR5 specifically recognizes and binds ligand-bound VDR when it is not associated with coactivators (NCOAs). In presence of NCOAs, the UBR5-degron is not accessible, preventing its ubiquitination and degradation.</text>
</comment>
<comment type="similarity">
    <text evidence="10">Belongs to the nuclear hormone receptor family. NR1 subfamily.</text>
</comment>
<keyword id="KW-0963">Cytoplasm</keyword>
<keyword id="KW-0238">DNA-binding</keyword>
<keyword id="KW-0479">Metal-binding</keyword>
<keyword id="KW-0539">Nucleus</keyword>
<keyword id="KW-0675">Receptor</keyword>
<keyword id="KW-1185">Reference proteome</keyword>
<keyword id="KW-0804">Transcription</keyword>
<keyword id="KW-0805">Transcription regulation</keyword>
<keyword id="KW-0832">Ubl conjugation</keyword>
<keyword id="KW-0862">Zinc</keyword>
<keyword id="KW-0863">Zinc-finger</keyword>
<organism>
    <name type="scientific">Mus musculus</name>
    <name type="common">Mouse</name>
    <dbReference type="NCBI Taxonomy" id="10090"/>
    <lineage>
        <taxon>Eukaryota</taxon>
        <taxon>Metazoa</taxon>
        <taxon>Chordata</taxon>
        <taxon>Craniata</taxon>
        <taxon>Vertebrata</taxon>
        <taxon>Euteleostomi</taxon>
        <taxon>Mammalia</taxon>
        <taxon>Eutheria</taxon>
        <taxon>Euarchontoglires</taxon>
        <taxon>Glires</taxon>
        <taxon>Rodentia</taxon>
        <taxon>Myomorpha</taxon>
        <taxon>Muroidea</taxon>
        <taxon>Muridae</taxon>
        <taxon>Murinae</taxon>
        <taxon>Mus</taxon>
        <taxon>Mus</taxon>
    </lineage>
</organism>
<sequence length="422" mass="47834">MEAMAASTSLPDPGDFDRNVPRICGVCGDRATGFHFNAMTCEGCKGFFRRSMKRKALFTCPFNGDCRITKDNRRHCQACRLKRCVDIGMMKEFILTDEEVQRKREMIMKRKEEEALKDSLRPKLSEEQQHIIAILLDAHHKTYDPTYADFRDFRPPIRADVSTGSYSPRPTLSFSGDSSSNSDLYTPSLDMMEPASFSTMDLNEEGSDDPSVTLDLSPLSMLPHLADLVSYSIQKVIGFAKMIPGFRDLTSDDQIVLLKSSAIEVIMLRSNQSFTLDDMSWDCGSQDYKYDITDVSRAGHTLELIEPLIKFQVGLKKLNLHEEEHVLLMAICIVSPDRPGVQDAKLVEAIQDRLSNTLQTYIRCRHPPPGSHQLYAKMIQKLADLRSLNEEHSKQYRSLSFQPENSMKLTPLVLEVFGNEIS</sequence>
<dbReference type="EMBL" id="D31969">
    <property type="protein sequence ID" value="BAA06737.1"/>
    <property type="molecule type" value="mRNA"/>
</dbReference>
<dbReference type="EMBL" id="AK030339">
    <property type="protein sequence ID" value="BAC26911.1"/>
    <property type="molecule type" value="mRNA"/>
</dbReference>
<dbReference type="EMBL" id="AK154647">
    <property type="protein sequence ID" value="BAE32738.1"/>
    <property type="molecule type" value="mRNA"/>
</dbReference>
<dbReference type="EMBL" id="CH466550">
    <property type="protein sequence ID" value="EDL04218.1"/>
    <property type="molecule type" value="Genomic_DNA"/>
</dbReference>
<dbReference type="EMBL" id="BC006716">
    <property type="protein sequence ID" value="AAH06716.1"/>
    <property type="molecule type" value="mRNA"/>
</dbReference>
<dbReference type="CCDS" id="CCDS27784.1"/>
<dbReference type="PIR" id="PC4019">
    <property type="entry name" value="PC4019"/>
</dbReference>
<dbReference type="RefSeq" id="NP_033530.2">
    <property type="nucleotide sequence ID" value="NM_009504.4"/>
</dbReference>
<dbReference type="SMR" id="P48281"/>
<dbReference type="BioGRID" id="204511">
    <property type="interactions" value="7"/>
</dbReference>
<dbReference type="ComplexPortal" id="CPX-673">
    <property type="entry name" value="RXRalpha-VDR nuclear hormone receptor complex"/>
</dbReference>
<dbReference type="ComplexPortal" id="CPX-872">
    <property type="entry name" value="RXRbeta-VDR nuclear hormone receptor complex"/>
</dbReference>
<dbReference type="CORUM" id="P48281"/>
<dbReference type="DIP" id="DIP-31478N"/>
<dbReference type="FunCoup" id="P48281">
    <property type="interactions" value="846"/>
</dbReference>
<dbReference type="IntAct" id="P48281">
    <property type="interactions" value="12"/>
</dbReference>
<dbReference type="MINT" id="P48281"/>
<dbReference type="STRING" id="10090.ENSMUSP00000023119"/>
<dbReference type="BindingDB" id="P48281"/>
<dbReference type="ChEMBL" id="CHEMBL5601"/>
<dbReference type="DrugCentral" id="P48281"/>
<dbReference type="GlyGen" id="P48281">
    <property type="glycosylation" value="1 site, 1 O-linked glycan (1 site)"/>
</dbReference>
<dbReference type="iPTMnet" id="P48281"/>
<dbReference type="PhosphoSitePlus" id="P48281"/>
<dbReference type="jPOST" id="P48281"/>
<dbReference type="PaxDb" id="10090-ENSMUSP00000023119"/>
<dbReference type="PeptideAtlas" id="P48281"/>
<dbReference type="ProteomicsDB" id="300197"/>
<dbReference type="Pumba" id="P48281"/>
<dbReference type="Antibodypedia" id="3902">
    <property type="antibodies" value="817 antibodies from 43 providers"/>
</dbReference>
<dbReference type="DNASU" id="22337"/>
<dbReference type="Ensembl" id="ENSMUST00000023119.15">
    <property type="protein sequence ID" value="ENSMUSP00000023119.9"/>
    <property type="gene ID" value="ENSMUSG00000022479.16"/>
</dbReference>
<dbReference type="GeneID" id="22337"/>
<dbReference type="KEGG" id="mmu:22337"/>
<dbReference type="UCSC" id="uc007xlk.1">
    <property type="organism name" value="mouse"/>
</dbReference>
<dbReference type="AGR" id="MGI:103076"/>
<dbReference type="CTD" id="7421"/>
<dbReference type="MGI" id="MGI:103076">
    <property type="gene designation" value="Vdr"/>
</dbReference>
<dbReference type="VEuPathDB" id="HostDB:ENSMUSG00000022479"/>
<dbReference type="eggNOG" id="KOG3575">
    <property type="taxonomic scope" value="Eukaryota"/>
</dbReference>
<dbReference type="GeneTree" id="ENSGT00940000155473"/>
<dbReference type="HOGENOM" id="CLU_007368_12_0_1"/>
<dbReference type="InParanoid" id="P48281"/>
<dbReference type="OMA" id="DMSWDCG"/>
<dbReference type="OrthoDB" id="6352325at2759"/>
<dbReference type="PhylomeDB" id="P48281"/>
<dbReference type="TreeFam" id="TF316304"/>
<dbReference type="Reactome" id="R-MMU-196791">
    <property type="pathway name" value="Vitamin D (calciferol) metabolism"/>
</dbReference>
<dbReference type="Reactome" id="R-MMU-383280">
    <property type="pathway name" value="Nuclear Receptor transcription pathway"/>
</dbReference>
<dbReference type="Reactome" id="R-MMU-4090294">
    <property type="pathway name" value="SUMOylation of intracellular receptors"/>
</dbReference>
<dbReference type="BioGRID-ORCS" id="22337">
    <property type="hits" value="3 hits in 80 CRISPR screens"/>
</dbReference>
<dbReference type="ChiTaRS" id="Vdr">
    <property type="organism name" value="mouse"/>
</dbReference>
<dbReference type="PRO" id="PR:P48281"/>
<dbReference type="Proteomes" id="UP000000589">
    <property type="component" value="Chromosome 15"/>
</dbReference>
<dbReference type="RNAct" id="P48281">
    <property type="molecule type" value="protein"/>
</dbReference>
<dbReference type="Bgee" id="ENSMUSG00000022479">
    <property type="expression patterns" value="Expressed in duodenum and 138 other cell types or tissues"/>
</dbReference>
<dbReference type="ExpressionAtlas" id="P48281">
    <property type="expression patterns" value="baseline and differential"/>
</dbReference>
<dbReference type="GO" id="GO:0000785">
    <property type="term" value="C:chromatin"/>
    <property type="evidence" value="ECO:0007669"/>
    <property type="project" value="Ensembl"/>
</dbReference>
<dbReference type="GO" id="GO:0005829">
    <property type="term" value="C:cytosol"/>
    <property type="evidence" value="ECO:0007669"/>
    <property type="project" value="Ensembl"/>
</dbReference>
<dbReference type="GO" id="GO:0005654">
    <property type="term" value="C:nucleoplasm"/>
    <property type="evidence" value="ECO:0007669"/>
    <property type="project" value="Ensembl"/>
</dbReference>
<dbReference type="GO" id="GO:0043235">
    <property type="term" value="C:receptor complex"/>
    <property type="evidence" value="ECO:0007669"/>
    <property type="project" value="Ensembl"/>
</dbReference>
<dbReference type="GO" id="GO:0090575">
    <property type="term" value="C:RNA polymerase II transcription regulator complex"/>
    <property type="evidence" value="ECO:0000266"/>
    <property type="project" value="ComplexPortal"/>
</dbReference>
<dbReference type="GO" id="GO:0038186">
    <property type="term" value="F:bile acid nuclear receptor activity"/>
    <property type="evidence" value="ECO:0007669"/>
    <property type="project" value="Ensembl"/>
</dbReference>
<dbReference type="GO" id="GO:1902098">
    <property type="term" value="F:calcitriol binding"/>
    <property type="evidence" value="ECO:0007669"/>
    <property type="project" value="Ensembl"/>
</dbReference>
<dbReference type="GO" id="GO:0003677">
    <property type="term" value="F:DNA binding"/>
    <property type="evidence" value="ECO:0000314"/>
    <property type="project" value="MGI"/>
</dbReference>
<dbReference type="GO" id="GO:1902121">
    <property type="term" value="F:lithocholic acid binding"/>
    <property type="evidence" value="ECO:0007669"/>
    <property type="project" value="Ensembl"/>
</dbReference>
<dbReference type="GO" id="GO:0004879">
    <property type="term" value="F:nuclear receptor activity"/>
    <property type="evidence" value="ECO:0000314"/>
    <property type="project" value="MGI"/>
</dbReference>
<dbReference type="GO" id="GO:0046965">
    <property type="term" value="F:nuclear retinoid X receptor binding"/>
    <property type="evidence" value="ECO:0007669"/>
    <property type="project" value="Ensembl"/>
</dbReference>
<dbReference type="GO" id="GO:0003707">
    <property type="term" value="F:nuclear steroid receptor activity"/>
    <property type="evidence" value="ECO:0007669"/>
    <property type="project" value="Ensembl"/>
</dbReference>
<dbReference type="GO" id="GO:0070644">
    <property type="term" value="F:vitamin D response element binding"/>
    <property type="evidence" value="ECO:0007669"/>
    <property type="project" value="Ensembl"/>
</dbReference>
<dbReference type="GO" id="GO:0008270">
    <property type="term" value="F:zinc ion binding"/>
    <property type="evidence" value="ECO:0007669"/>
    <property type="project" value="UniProtKB-KW"/>
</dbReference>
<dbReference type="GO" id="GO:0009887">
    <property type="term" value="P:animal organ morphogenesis"/>
    <property type="evidence" value="ECO:0000315"/>
    <property type="project" value="MGI"/>
</dbReference>
<dbReference type="GO" id="GO:0060057">
    <property type="term" value="P:apoptotic process involved in mammary gland involution"/>
    <property type="evidence" value="ECO:0000315"/>
    <property type="project" value="MGI"/>
</dbReference>
<dbReference type="GO" id="GO:0006816">
    <property type="term" value="P:calcium ion transport"/>
    <property type="evidence" value="ECO:0000315"/>
    <property type="project" value="MGI"/>
</dbReference>
<dbReference type="GO" id="GO:0000902">
    <property type="term" value="P:cell morphogenesis"/>
    <property type="evidence" value="ECO:0007669"/>
    <property type="project" value="Ensembl"/>
</dbReference>
<dbReference type="GO" id="GO:0046697">
    <property type="term" value="P:decidualization"/>
    <property type="evidence" value="ECO:0007669"/>
    <property type="project" value="Ensembl"/>
</dbReference>
<dbReference type="GO" id="GO:0050892">
    <property type="term" value="P:intestinal absorption"/>
    <property type="evidence" value="ECO:0000315"/>
    <property type="project" value="MGI"/>
</dbReference>
<dbReference type="GO" id="GO:0006874">
    <property type="term" value="P:intracellular calcium ion homeostasis"/>
    <property type="evidence" value="ECO:0000315"/>
    <property type="project" value="MGI"/>
</dbReference>
<dbReference type="GO" id="GO:0007595">
    <property type="term" value="P:lactation"/>
    <property type="evidence" value="ECO:0000315"/>
    <property type="project" value="MGI"/>
</dbReference>
<dbReference type="GO" id="GO:0060745">
    <property type="term" value="P:mammary gland branching involved in pregnancy"/>
    <property type="evidence" value="ECO:0000315"/>
    <property type="project" value="MGI"/>
</dbReference>
<dbReference type="GO" id="GO:0042789">
    <property type="term" value="P:mRNA transcription by RNA polymerase II"/>
    <property type="evidence" value="ECO:0000266"/>
    <property type="project" value="ComplexPortal"/>
</dbReference>
<dbReference type="GO" id="GO:0045892">
    <property type="term" value="P:negative regulation of DNA-templated transcription"/>
    <property type="evidence" value="ECO:0000266"/>
    <property type="project" value="MGI"/>
</dbReference>
<dbReference type="GO" id="GO:0010839">
    <property type="term" value="P:negative regulation of keratinocyte proliferation"/>
    <property type="evidence" value="ECO:0007669"/>
    <property type="project" value="Ensembl"/>
</dbReference>
<dbReference type="GO" id="GO:0000122">
    <property type="term" value="P:negative regulation of transcription by RNA polymerase II"/>
    <property type="evidence" value="ECO:0007669"/>
    <property type="project" value="Ensembl"/>
</dbReference>
<dbReference type="GO" id="GO:0038185">
    <property type="term" value="P:nuclear receptor-mediated bile acid signaling pathway"/>
    <property type="evidence" value="ECO:0007669"/>
    <property type="project" value="Ensembl"/>
</dbReference>
<dbReference type="GO" id="GO:0035435">
    <property type="term" value="P:phosphate ion transmembrane transport"/>
    <property type="evidence" value="ECO:0007669"/>
    <property type="project" value="Ensembl"/>
</dbReference>
<dbReference type="GO" id="GO:0060058">
    <property type="term" value="P:positive regulation of apoptotic process involved in mammary gland involution"/>
    <property type="evidence" value="ECO:0000315"/>
    <property type="project" value="MGI"/>
</dbReference>
<dbReference type="GO" id="GO:0030501">
    <property type="term" value="P:positive regulation of bone mineralization"/>
    <property type="evidence" value="ECO:0000303"/>
    <property type="project" value="ComplexPortal"/>
</dbReference>
<dbReference type="GO" id="GO:0010628">
    <property type="term" value="P:positive regulation of gene expression"/>
    <property type="evidence" value="ECO:0007669"/>
    <property type="project" value="Ensembl"/>
</dbReference>
<dbReference type="GO" id="GO:0045618">
    <property type="term" value="P:positive regulation of keratinocyte differentiation"/>
    <property type="evidence" value="ECO:0007669"/>
    <property type="project" value="Ensembl"/>
</dbReference>
<dbReference type="GO" id="GO:0045944">
    <property type="term" value="P:positive regulation of transcription by RNA polymerase II"/>
    <property type="evidence" value="ECO:0000266"/>
    <property type="project" value="ComplexPortal"/>
</dbReference>
<dbReference type="GO" id="GO:0070564">
    <property type="term" value="P:positive regulation of vitamin D receptor signaling pathway"/>
    <property type="evidence" value="ECO:0000266"/>
    <property type="project" value="ComplexPortal"/>
</dbReference>
<dbReference type="GO" id="GO:0060558">
    <property type="term" value="P:regulation of calcidiol 1-monooxygenase activity"/>
    <property type="evidence" value="ECO:0000315"/>
    <property type="project" value="BHF-UCL"/>
</dbReference>
<dbReference type="GO" id="GO:0006355">
    <property type="term" value="P:regulation of DNA-templated transcription"/>
    <property type="evidence" value="ECO:0000314"/>
    <property type="project" value="MGI"/>
</dbReference>
<dbReference type="GO" id="GO:1903412">
    <property type="term" value="P:response to bile acid"/>
    <property type="evidence" value="ECO:0007669"/>
    <property type="project" value="Ensembl"/>
</dbReference>
<dbReference type="GO" id="GO:0048384">
    <property type="term" value="P:retinoic acid receptor signaling pathway"/>
    <property type="evidence" value="ECO:0007669"/>
    <property type="project" value="Ensembl"/>
</dbReference>
<dbReference type="GO" id="GO:0001501">
    <property type="term" value="P:skeletal system development"/>
    <property type="evidence" value="ECO:0000315"/>
    <property type="project" value="MGI"/>
</dbReference>
<dbReference type="GO" id="GO:0070561">
    <property type="term" value="P:vitamin D receptor signaling pathway"/>
    <property type="evidence" value="ECO:0000250"/>
    <property type="project" value="UniProtKB"/>
</dbReference>
<dbReference type="CDD" id="cd06955">
    <property type="entry name" value="NR_DBD_VDR"/>
    <property type="match status" value="1"/>
</dbReference>
<dbReference type="CDD" id="cd06933">
    <property type="entry name" value="NR_LBD_VDR"/>
    <property type="match status" value="1"/>
</dbReference>
<dbReference type="FunFam" id="3.30.50.10:FF:000023">
    <property type="entry name" value="Vitamin D3 receptor"/>
    <property type="match status" value="1"/>
</dbReference>
<dbReference type="FunFam" id="1.10.565.10:FF:000021">
    <property type="entry name" value="Vitamin D3 receptor B"/>
    <property type="match status" value="1"/>
</dbReference>
<dbReference type="Gene3D" id="3.30.50.10">
    <property type="entry name" value="Erythroid Transcription Factor GATA-1, subunit A"/>
    <property type="match status" value="1"/>
</dbReference>
<dbReference type="Gene3D" id="1.10.565.10">
    <property type="entry name" value="Retinoid X Receptor"/>
    <property type="match status" value="1"/>
</dbReference>
<dbReference type="InterPro" id="IPR042153">
    <property type="entry name" value="DBD_VDR"/>
</dbReference>
<dbReference type="InterPro" id="IPR035500">
    <property type="entry name" value="NHR-like_dom_sf"/>
</dbReference>
<dbReference type="InterPro" id="IPR000536">
    <property type="entry name" value="Nucl_hrmn_rcpt_lig-bd"/>
</dbReference>
<dbReference type="InterPro" id="IPR050234">
    <property type="entry name" value="Nuclear_hormone_rcpt_NR1"/>
</dbReference>
<dbReference type="InterPro" id="IPR001723">
    <property type="entry name" value="Nuclear_hrmn_rcpt"/>
</dbReference>
<dbReference type="InterPro" id="IPR000324">
    <property type="entry name" value="VitD_rcpt"/>
</dbReference>
<dbReference type="InterPro" id="IPR001628">
    <property type="entry name" value="Znf_hrmn_rcpt"/>
</dbReference>
<dbReference type="InterPro" id="IPR013088">
    <property type="entry name" value="Znf_NHR/GATA"/>
</dbReference>
<dbReference type="PANTHER" id="PTHR24082">
    <property type="entry name" value="NUCLEAR HORMONE RECEPTOR"/>
    <property type="match status" value="1"/>
</dbReference>
<dbReference type="PANTHER" id="PTHR24082:SF38">
    <property type="entry name" value="VITAMIN D3 RECEPTOR"/>
    <property type="match status" value="1"/>
</dbReference>
<dbReference type="Pfam" id="PF00104">
    <property type="entry name" value="Hormone_recep"/>
    <property type="match status" value="1"/>
</dbReference>
<dbReference type="Pfam" id="PF00105">
    <property type="entry name" value="zf-C4"/>
    <property type="match status" value="1"/>
</dbReference>
<dbReference type="PRINTS" id="PR00398">
    <property type="entry name" value="STRDHORMONER"/>
</dbReference>
<dbReference type="PRINTS" id="PR00047">
    <property type="entry name" value="STROIDFINGER"/>
</dbReference>
<dbReference type="PRINTS" id="PR00350">
    <property type="entry name" value="VITAMINDR"/>
</dbReference>
<dbReference type="SMART" id="SM00430">
    <property type="entry name" value="HOLI"/>
    <property type="match status" value="1"/>
</dbReference>
<dbReference type="SMART" id="SM00399">
    <property type="entry name" value="ZnF_C4"/>
    <property type="match status" value="1"/>
</dbReference>
<dbReference type="SUPFAM" id="SSF57716">
    <property type="entry name" value="Glucocorticoid receptor-like (DNA-binding domain)"/>
    <property type="match status" value="1"/>
</dbReference>
<dbReference type="SUPFAM" id="SSF48508">
    <property type="entry name" value="Nuclear receptor ligand-binding domain"/>
    <property type="match status" value="1"/>
</dbReference>
<dbReference type="PROSITE" id="PS51843">
    <property type="entry name" value="NR_LBD"/>
    <property type="match status" value="1"/>
</dbReference>
<dbReference type="PROSITE" id="PS00031">
    <property type="entry name" value="NUCLEAR_REC_DBD_1"/>
    <property type="match status" value="1"/>
</dbReference>
<dbReference type="PROSITE" id="PS51030">
    <property type="entry name" value="NUCLEAR_REC_DBD_2"/>
    <property type="match status" value="1"/>
</dbReference>
<reference key="1">
    <citation type="journal article" date="1995" name="Gene">
        <title>Cloning and sequencing of the gene encoding the mouse vitamin D receptor.</title>
        <authorList>
            <person name="Kamei Y."/>
            <person name="Kawada T."/>
            <person name="Fukuwatari T."/>
            <person name="Ono T."/>
            <person name="Kato S."/>
            <person name="Sugimoto E."/>
        </authorList>
    </citation>
    <scope>NUCLEOTIDE SEQUENCE [MRNA]</scope>
</reference>
<reference key="2">
    <citation type="journal article" date="2005" name="Science">
        <title>The transcriptional landscape of the mammalian genome.</title>
        <authorList>
            <person name="Carninci P."/>
            <person name="Kasukawa T."/>
            <person name="Katayama S."/>
            <person name="Gough J."/>
            <person name="Frith M.C."/>
            <person name="Maeda N."/>
            <person name="Oyama R."/>
            <person name="Ravasi T."/>
            <person name="Lenhard B."/>
            <person name="Wells C."/>
            <person name="Kodzius R."/>
            <person name="Shimokawa K."/>
            <person name="Bajic V.B."/>
            <person name="Brenner S.E."/>
            <person name="Batalov S."/>
            <person name="Forrest A.R."/>
            <person name="Zavolan M."/>
            <person name="Davis M.J."/>
            <person name="Wilming L.G."/>
            <person name="Aidinis V."/>
            <person name="Allen J.E."/>
            <person name="Ambesi-Impiombato A."/>
            <person name="Apweiler R."/>
            <person name="Aturaliya R.N."/>
            <person name="Bailey T.L."/>
            <person name="Bansal M."/>
            <person name="Baxter L."/>
            <person name="Beisel K.W."/>
            <person name="Bersano T."/>
            <person name="Bono H."/>
            <person name="Chalk A.M."/>
            <person name="Chiu K.P."/>
            <person name="Choudhary V."/>
            <person name="Christoffels A."/>
            <person name="Clutterbuck D.R."/>
            <person name="Crowe M.L."/>
            <person name="Dalla E."/>
            <person name="Dalrymple B.P."/>
            <person name="de Bono B."/>
            <person name="Della Gatta G."/>
            <person name="di Bernardo D."/>
            <person name="Down T."/>
            <person name="Engstrom P."/>
            <person name="Fagiolini M."/>
            <person name="Faulkner G."/>
            <person name="Fletcher C.F."/>
            <person name="Fukushima T."/>
            <person name="Furuno M."/>
            <person name="Futaki S."/>
            <person name="Gariboldi M."/>
            <person name="Georgii-Hemming P."/>
            <person name="Gingeras T.R."/>
            <person name="Gojobori T."/>
            <person name="Green R.E."/>
            <person name="Gustincich S."/>
            <person name="Harbers M."/>
            <person name="Hayashi Y."/>
            <person name="Hensch T.K."/>
            <person name="Hirokawa N."/>
            <person name="Hill D."/>
            <person name="Huminiecki L."/>
            <person name="Iacono M."/>
            <person name="Ikeo K."/>
            <person name="Iwama A."/>
            <person name="Ishikawa T."/>
            <person name="Jakt M."/>
            <person name="Kanapin A."/>
            <person name="Katoh M."/>
            <person name="Kawasawa Y."/>
            <person name="Kelso J."/>
            <person name="Kitamura H."/>
            <person name="Kitano H."/>
            <person name="Kollias G."/>
            <person name="Krishnan S.P."/>
            <person name="Kruger A."/>
            <person name="Kummerfeld S.K."/>
            <person name="Kurochkin I.V."/>
            <person name="Lareau L.F."/>
            <person name="Lazarevic D."/>
            <person name="Lipovich L."/>
            <person name="Liu J."/>
            <person name="Liuni S."/>
            <person name="McWilliam S."/>
            <person name="Madan Babu M."/>
            <person name="Madera M."/>
            <person name="Marchionni L."/>
            <person name="Matsuda H."/>
            <person name="Matsuzawa S."/>
            <person name="Miki H."/>
            <person name="Mignone F."/>
            <person name="Miyake S."/>
            <person name="Morris K."/>
            <person name="Mottagui-Tabar S."/>
            <person name="Mulder N."/>
            <person name="Nakano N."/>
            <person name="Nakauchi H."/>
            <person name="Ng P."/>
            <person name="Nilsson R."/>
            <person name="Nishiguchi S."/>
            <person name="Nishikawa S."/>
            <person name="Nori F."/>
            <person name="Ohara O."/>
            <person name="Okazaki Y."/>
            <person name="Orlando V."/>
            <person name="Pang K.C."/>
            <person name="Pavan W.J."/>
            <person name="Pavesi G."/>
            <person name="Pesole G."/>
            <person name="Petrovsky N."/>
            <person name="Piazza S."/>
            <person name="Reed J."/>
            <person name="Reid J.F."/>
            <person name="Ring B.Z."/>
            <person name="Ringwald M."/>
            <person name="Rost B."/>
            <person name="Ruan Y."/>
            <person name="Salzberg S.L."/>
            <person name="Sandelin A."/>
            <person name="Schneider C."/>
            <person name="Schoenbach C."/>
            <person name="Sekiguchi K."/>
            <person name="Semple C.A."/>
            <person name="Seno S."/>
            <person name="Sessa L."/>
            <person name="Sheng Y."/>
            <person name="Shibata Y."/>
            <person name="Shimada H."/>
            <person name="Shimada K."/>
            <person name="Silva D."/>
            <person name="Sinclair B."/>
            <person name="Sperling S."/>
            <person name="Stupka E."/>
            <person name="Sugiura K."/>
            <person name="Sultana R."/>
            <person name="Takenaka Y."/>
            <person name="Taki K."/>
            <person name="Tammoja K."/>
            <person name="Tan S.L."/>
            <person name="Tang S."/>
            <person name="Taylor M.S."/>
            <person name="Tegner J."/>
            <person name="Teichmann S.A."/>
            <person name="Ueda H.R."/>
            <person name="van Nimwegen E."/>
            <person name="Verardo R."/>
            <person name="Wei C.L."/>
            <person name="Yagi K."/>
            <person name="Yamanishi H."/>
            <person name="Zabarovsky E."/>
            <person name="Zhu S."/>
            <person name="Zimmer A."/>
            <person name="Hide W."/>
            <person name="Bult C."/>
            <person name="Grimmond S.M."/>
            <person name="Teasdale R.D."/>
            <person name="Liu E.T."/>
            <person name="Brusic V."/>
            <person name="Quackenbush J."/>
            <person name="Wahlestedt C."/>
            <person name="Mattick J.S."/>
            <person name="Hume D.A."/>
            <person name="Kai C."/>
            <person name="Sasaki D."/>
            <person name="Tomaru Y."/>
            <person name="Fukuda S."/>
            <person name="Kanamori-Katayama M."/>
            <person name="Suzuki M."/>
            <person name="Aoki J."/>
            <person name="Arakawa T."/>
            <person name="Iida J."/>
            <person name="Imamura K."/>
            <person name="Itoh M."/>
            <person name="Kato T."/>
            <person name="Kawaji H."/>
            <person name="Kawagashira N."/>
            <person name="Kawashima T."/>
            <person name="Kojima M."/>
            <person name="Kondo S."/>
            <person name="Konno H."/>
            <person name="Nakano K."/>
            <person name="Ninomiya N."/>
            <person name="Nishio T."/>
            <person name="Okada M."/>
            <person name="Plessy C."/>
            <person name="Shibata K."/>
            <person name="Shiraki T."/>
            <person name="Suzuki S."/>
            <person name="Tagami M."/>
            <person name="Waki K."/>
            <person name="Watahiki A."/>
            <person name="Okamura-Oho Y."/>
            <person name="Suzuki H."/>
            <person name="Kawai J."/>
            <person name="Hayashizaki Y."/>
        </authorList>
    </citation>
    <scope>NUCLEOTIDE SEQUENCE [LARGE SCALE MRNA]</scope>
    <source>
        <strain>C57BL/6J</strain>
        <strain>NOD</strain>
        <tissue>Intestine</tissue>
    </source>
</reference>
<reference key="3">
    <citation type="submission" date="2005-09" db="EMBL/GenBank/DDBJ databases">
        <authorList>
            <person name="Mural R.J."/>
            <person name="Adams M.D."/>
            <person name="Myers E.W."/>
            <person name="Smith H.O."/>
            <person name="Venter J.C."/>
        </authorList>
    </citation>
    <scope>NUCLEOTIDE SEQUENCE [LARGE SCALE GENOMIC DNA]</scope>
</reference>
<reference key="4">
    <citation type="journal article" date="2004" name="Genome Res.">
        <title>The status, quality, and expansion of the NIH full-length cDNA project: the Mammalian Gene Collection (MGC).</title>
        <authorList>
            <consortium name="The MGC Project Team"/>
        </authorList>
    </citation>
    <scope>NUCLEOTIDE SEQUENCE [LARGE SCALE MRNA]</scope>
    <source>
        <strain>FVB/N</strain>
        <tissue>Mammary tumor</tissue>
    </source>
</reference>
<reference key="5">
    <citation type="journal article" date="2002" name="Science">
        <title>Vitamin D receptor as an intestinal bile acid sensor.</title>
        <authorList>
            <person name="Makishima M."/>
            <person name="Lu T.T."/>
            <person name="Xie W."/>
            <person name="Whitfield G.K."/>
            <person name="Domoto H."/>
            <person name="Evans R.M."/>
            <person name="Haussler M.R."/>
            <person name="Mangelsdorf D.J."/>
        </authorList>
    </citation>
    <scope>FUNCTION</scope>
</reference>
<reference key="6">
    <citation type="journal article" date="2003" name="Mol. Endocrinol.">
        <title>Klotho, a gene related to a syndrome resembling human premature aging, functions in a negative regulatory circuit of vitamin D endocrine system.</title>
        <authorList>
            <person name="Tsujikawa H."/>
            <person name="Kurotaki Y."/>
            <person name="Fujimori T."/>
            <person name="Fukuda K."/>
            <person name="Nabeshima Y."/>
        </authorList>
    </citation>
    <scope>INDUCTION</scope>
</reference>
<reference key="7">
    <citation type="journal article" date="2017" name="Proc. Natl. Acad. Sci. U.S.A.">
        <title>Circadian repressors CRY1 and CRY2 broadly interact with nuclear receptors and modulate transcriptional activity.</title>
        <authorList>
            <person name="Kriebs A."/>
            <person name="Jordan S.D."/>
            <person name="Soto E."/>
            <person name="Henriksson E."/>
            <person name="Sandate C.R."/>
            <person name="Vaughan M.E."/>
            <person name="Chan A.B."/>
            <person name="Duglan D."/>
            <person name="Papp S.J."/>
            <person name="Huber A.L."/>
            <person name="Afetian M.E."/>
            <person name="Yu R.T."/>
            <person name="Zhao X."/>
            <person name="Downes M."/>
            <person name="Evans R.M."/>
            <person name="Lamia K.A."/>
        </authorList>
    </citation>
    <scope>INTERACTION WITH CRY1 AND CRY2</scope>
</reference>
<reference key="8">
    <citation type="journal article" date="2020" name="Kidney Int.">
        <title>Lithocholic acid increases intestinal phosphate and calcium absorption in a vitamin D receptor dependent but transcellular pathway independent manner.</title>
        <authorList>
            <person name="Hashimoto N."/>
            <person name="Matsui I."/>
            <person name="Ishizuka S."/>
            <person name="Inoue K."/>
            <person name="Matsumoto A."/>
            <person name="Shimada K."/>
            <person name="Hori S."/>
            <person name="Lee D.G."/>
            <person name="Yasuda S."/>
            <person name="Katsuma Y."/>
            <person name="Kajimoto S."/>
            <person name="Doi Y."/>
            <person name="Yamaguchi S."/>
            <person name="Kubota K."/>
            <person name="Oka T."/>
            <person name="Sakaguchi Y."/>
            <person name="Takabatake Y."/>
            <person name="Hamano T."/>
            <person name="Isaka Y."/>
        </authorList>
    </citation>
    <scope>FUNCTION</scope>
</reference>
<proteinExistence type="evidence at protein level"/>
<protein>
    <recommendedName>
        <fullName>Vitamin D3 receptor</fullName>
        <shortName>VDR</shortName>
    </recommendedName>
    <alternativeName>
        <fullName>1,25-dihydroxyvitamin D3 receptor</fullName>
    </alternativeName>
    <alternativeName>
        <fullName>Nuclear receptor subfamily 1 group I member 1</fullName>
    </alternativeName>
</protein>
<evidence type="ECO:0000250" key="1">
    <source>
        <dbReference type="UniProtKB" id="P11473"/>
    </source>
</evidence>
<evidence type="ECO:0000250" key="2">
    <source>
        <dbReference type="UniProtKB" id="P13053"/>
    </source>
</evidence>
<evidence type="ECO:0000255" key="3">
    <source>
        <dbReference type="PROSITE-ProRule" id="PRU00407"/>
    </source>
</evidence>
<evidence type="ECO:0000255" key="4">
    <source>
        <dbReference type="PROSITE-ProRule" id="PRU01189"/>
    </source>
</evidence>
<evidence type="ECO:0000256" key="5">
    <source>
        <dbReference type="SAM" id="MobiDB-lite"/>
    </source>
</evidence>
<evidence type="ECO:0000269" key="6">
    <source>
    </source>
</evidence>
<evidence type="ECO:0000269" key="7">
    <source>
    </source>
</evidence>
<evidence type="ECO:0000269" key="8">
    <source>
    </source>
</evidence>
<evidence type="ECO:0000269" key="9">
    <source>
    </source>
</evidence>
<evidence type="ECO:0000305" key="10"/>
<gene>
    <name type="primary">Vdr</name>
    <name type="synonym">Nr1i1</name>
</gene>
<name>VDR_MOUSE</name>
<feature type="chain" id="PRO_0000053543" description="Vitamin D3 receptor">
    <location>
        <begin position="1"/>
        <end position="422"/>
    </location>
</feature>
<feature type="domain" description="NR LBD" evidence="4">
    <location>
        <begin position="127"/>
        <end position="418"/>
    </location>
</feature>
<feature type="DNA-binding region" description="Nuclear receptor" evidence="3">
    <location>
        <begin position="21"/>
        <end position="96"/>
    </location>
</feature>
<feature type="zinc finger region" description="NR C4-type" evidence="3">
    <location>
        <begin position="24"/>
        <end position="44"/>
    </location>
</feature>
<feature type="zinc finger region" description="NR C4-type" evidence="3">
    <location>
        <begin position="60"/>
        <end position="84"/>
    </location>
</feature>
<feature type="region of interest" description="Hinge" evidence="1">
    <location>
        <begin position="97"/>
        <end position="126"/>
    </location>
</feature>
<feature type="region of interest" description="Disordered" evidence="5">
    <location>
        <begin position="161"/>
        <end position="185"/>
    </location>
</feature>
<feature type="region of interest" description="Interaction with coactivator LXXLL motif" evidence="2">
    <location>
        <begin position="241"/>
        <end position="259"/>
    </location>
</feature>
<feature type="short sequence motif" description="9aaTAD" evidence="1">
    <location>
        <begin position="411"/>
        <end position="419"/>
    </location>
</feature>
<feature type="compositionally biased region" description="Polar residues" evidence="5">
    <location>
        <begin position="162"/>
        <end position="172"/>
    </location>
</feature>
<feature type="compositionally biased region" description="Low complexity" evidence="5">
    <location>
        <begin position="173"/>
        <end position="182"/>
    </location>
</feature>
<feature type="binding site" evidence="1">
    <location>
        <position position="24"/>
    </location>
    <ligand>
        <name>Zn(2+)</name>
        <dbReference type="ChEBI" id="CHEBI:29105"/>
        <label>1</label>
    </ligand>
</feature>
<feature type="binding site" evidence="1">
    <location>
        <position position="27"/>
    </location>
    <ligand>
        <name>Zn(2+)</name>
        <dbReference type="ChEBI" id="CHEBI:29105"/>
        <label>1</label>
    </ligand>
</feature>
<feature type="binding site" evidence="1">
    <location>
        <position position="41"/>
    </location>
    <ligand>
        <name>Zn(2+)</name>
        <dbReference type="ChEBI" id="CHEBI:29105"/>
        <label>1</label>
    </ligand>
</feature>
<feature type="binding site" evidence="1">
    <location>
        <position position="44"/>
    </location>
    <ligand>
        <name>Zn(2+)</name>
        <dbReference type="ChEBI" id="CHEBI:29105"/>
        <label>1</label>
    </ligand>
</feature>
<feature type="binding site" evidence="1">
    <location>
        <position position="60"/>
    </location>
    <ligand>
        <name>Zn(2+)</name>
        <dbReference type="ChEBI" id="CHEBI:29105"/>
        <label>2</label>
    </ligand>
</feature>
<feature type="binding site" evidence="1">
    <location>
        <position position="66"/>
    </location>
    <ligand>
        <name>Zn(2+)</name>
        <dbReference type="ChEBI" id="CHEBI:29105"/>
        <label>2</label>
    </ligand>
</feature>
<feature type="binding site" evidence="1">
    <location>
        <position position="76"/>
    </location>
    <ligand>
        <name>Zn(2+)</name>
        <dbReference type="ChEBI" id="CHEBI:29105"/>
        <label>2</label>
    </ligand>
</feature>
<feature type="binding site" evidence="1">
    <location>
        <position position="79"/>
    </location>
    <ligand>
        <name>Zn(2+)</name>
        <dbReference type="ChEBI" id="CHEBI:29105"/>
        <label>2</label>
    </ligand>
</feature>
<feature type="binding site" evidence="1">
    <location>
        <position position="143"/>
    </location>
    <ligand>
        <name>calcitriol</name>
        <dbReference type="ChEBI" id="CHEBI:17823"/>
    </ligand>
</feature>
<feature type="binding site" evidence="1">
    <location>
        <position position="232"/>
    </location>
    <ligand>
        <name>calcitriol</name>
        <dbReference type="ChEBI" id="CHEBI:17823"/>
    </ligand>
</feature>
<feature type="binding site" evidence="1">
    <location>
        <position position="269"/>
    </location>
    <ligand>
        <name>calcitriol</name>
        <dbReference type="ChEBI" id="CHEBI:17823"/>
    </ligand>
</feature>
<feature type="binding site" evidence="1">
    <location>
        <position position="273"/>
    </location>
    <ligand>
        <name>calcitriol</name>
        <dbReference type="ChEBI" id="CHEBI:17823"/>
    </ligand>
</feature>
<feature type="binding site" evidence="1">
    <location>
        <position position="300"/>
    </location>
    <ligand>
        <name>calcitriol</name>
        <dbReference type="ChEBI" id="CHEBI:17823"/>
    </ligand>
</feature>
<feature type="binding site" evidence="1">
    <location>
        <position position="392"/>
    </location>
    <ligand>
        <name>calcitriol</name>
        <dbReference type="ChEBI" id="CHEBI:17823"/>
    </ligand>
</feature>
<feature type="sequence conflict" description="In Ref. 1; BAA06737." evidence="10" ref="1">
    <original>L</original>
    <variation>M</variation>
    <location>
        <position position="276"/>
    </location>
</feature>
<accession>P48281</accession>
<accession>Q922X0</accession>